<accession>B7VK03</accession>
<feature type="chain" id="PRO_1000123393" description="3-methyl-2-oxobutanoate hydroxymethyltransferase">
    <location>
        <begin position="1"/>
        <end position="264"/>
    </location>
</feature>
<feature type="active site" description="Proton acceptor" evidence="1">
    <location>
        <position position="181"/>
    </location>
</feature>
<feature type="binding site" evidence="1">
    <location>
        <begin position="45"/>
        <end position="46"/>
    </location>
    <ligand>
        <name>3-methyl-2-oxobutanoate</name>
        <dbReference type="ChEBI" id="CHEBI:11851"/>
    </ligand>
</feature>
<feature type="binding site" evidence="1">
    <location>
        <position position="45"/>
    </location>
    <ligand>
        <name>Mg(2+)</name>
        <dbReference type="ChEBI" id="CHEBI:18420"/>
    </ligand>
</feature>
<feature type="binding site" evidence="1">
    <location>
        <position position="84"/>
    </location>
    <ligand>
        <name>3-methyl-2-oxobutanoate</name>
        <dbReference type="ChEBI" id="CHEBI:11851"/>
    </ligand>
</feature>
<feature type="binding site" evidence="1">
    <location>
        <position position="84"/>
    </location>
    <ligand>
        <name>Mg(2+)</name>
        <dbReference type="ChEBI" id="CHEBI:18420"/>
    </ligand>
</feature>
<feature type="binding site" evidence="1">
    <location>
        <position position="112"/>
    </location>
    <ligand>
        <name>3-methyl-2-oxobutanoate</name>
        <dbReference type="ChEBI" id="CHEBI:11851"/>
    </ligand>
</feature>
<feature type="binding site" evidence="1">
    <location>
        <position position="114"/>
    </location>
    <ligand>
        <name>Mg(2+)</name>
        <dbReference type="ChEBI" id="CHEBI:18420"/>
    </ligand>
</feature>
<keyword id="KW-0963">Cytoplasm</keyword>
<keyword id="KW-0460">Magnesium</keyword>
<keyword id="KW-0479">Metal-binding</keyword>
<keyword id="KW-0566">Pantothenate biosynthesis</keyword>
<keyword id="KW-0808">Transferase</keyword>
<sequence>MKKVTINDLIKCKQEGRKFATSTAYDASFAQLFESQDMPVLLVGDSLGMVLQGRNDTLPVTVEDIAYHTRSVRAGSPNCLLMADMPFMSYATPEQACENAATLMRAGANMVKIEGGSWLIETVKMLTERAVPVCAHLGLTPQSVNIFGGYKVQGRDNEQADKMVADALALQNAGAQIVLLECVPASLAKRITEACDVPVIGIGAGNVTDGQILVMHDMFGISANYMPKFSKNFLAETGDMRKAVALYKEEVESALFPDDAHTIA</sequence>
<organism>
    <name type="scientific">Vibrio atlanticus (strain LGP32)</name>
    <name type="common">Vibrio splendidus (strain Mel32)</name>
    <dbReference type="NCBI Taxonomy" id="575788"/>
    <lineage>
        <taxon>Bacteria</taxon>
        <taxon>Pseudomonadati</taxon>
        <taxon>Pseudomonadota</taxon>
        <taxon>Gammaproteobacteria</taxon>
        <taxon>Vibrionales</taxon>
        <taxon>Vibrionaceae</taxon>
        <taxon>Vibrio</taxon>
    </lineage>
</organism>
<name>PANB_VIBA3</name>
<protein>
    <recommendedName>
        <fullName evidence="1">3-methyl-2-oxobutanoate hydroxymethyltransferase</fullName>
        <ecNumber evidence="1">2.1.2.11</ecNumber>
    </recommendedName>
    <alternativeName>
        <fullName evidence="1">Ketopantoate hydroxymethyltransferase</fullName>
        <shortName evidence="1">KPHMT</shortName>
    </alternativeName>
</protein>
<proteinExistence type="inferred from homology"/>
<comment type="function">
    <text evidence="1">Catalyzes the reversible reaction in which hydroxymethyl group from 5,10-methylenetetrahydrofolate is transferred onto alpha-ketoisovalerate to form ketopantoate.</text>
</comment>
<comment type="catalytic activity">
    <reaction evidence="1">
        <text>3-methyl-2-oxobutanoate + (6R)-5,10-methylene-5,6,7,8-tetrahydrofolate + H2O = 2-dehydropantoate + (6S)-5,6,7,8-tetrahydrofolate</text>
        <dbReference type="Rhea" id="RHEA:11824"/>
        <dbReference type="ChEBI" id="CHEBI:11561"/>
        <dbReference type="ChEBI" id="CHEBI:11851"/>
        <dbReference type="ChEBI" id="CHEBI:15377"/>
        <dbReference type="ChEBI" id="CHEBI:15636"/>
        <dbReference type="ChEBI" id="CHEBI:57453"/>
        <dbReference type="EC" id="2.1.2.11"/>
    </reaction>
</comment>
<comment type="cofactor">
    <cofactor evidence="1">
        <name>Mg(2+)</name>
        <dbReference type="ChEBI" id="CHEBI:18420"/>
    </cofactor>
    <text evidence="1">Binds 1 Mg(2+) ion per subunit.</text>
</comment>
<comment type="pathway">
    <text evidence="1">Cofactor biosynthesis; (R)-pantothenate biosynthesis; (R)-pantoate from 3-methyl-2-oxobutanoate: step 1/2.</text>
</comment>
<comment type="subunit">
    <text evidence="1">Homodecamer; pentamer of dimers.</text>
</comment>
<comment type="subcellular location">
    <subcellularLocation>
        <location evidence="1">Cytoplasm</location>
    </subcellularLocation>
</comment>
<comment type="similarity">
    <text evidence="1">Belongs to the PanB family.</text>
</comment>
<reference key="1">
    <citation type="submission" date="2009-02" db="EMBL/GenBank/DDBJ databases">
        <title>Vibrio splendidus str. LGP32 complete genome.</title>
        <authorList>
            <person name="Mazel D."/>
            <person name="Le Roux F."/>
        </authorList>
    </citation>
    <scope>NUCLEOTIDE SEQUENCE [LARGE SCALE GENOMIC DNA]</scope>
    <source>
        <strain>LGP32</strain>
    </source>
</reference>
<evidence type="ECO:0000255" key="1">
    <source>
        <dbReference type="HAMAP-Rule" id="MF_00156"/>
    </source>
</evidence>
<dbReference type="EC" id="2.1.2.11" evidence="1"/>
<dbReference type="EMBL" id="FM954972">
    <property type="protein sequence ID" value="CAV19689.1"/>
    <property type="molecule type" value="Genomic_DNA"/>
</dbReference>
<dbReference type="SMR" id="B7VK03"/>
<dbReference type="STRING" id="575788.VS_2532"/>
<dbReference type="KEGG" id="vsp:VS_2532"/>
<dbReference type="PATRIC" id="fig|575788.5.peg.3791"/>
<dbReference type="eggNOG" id="COG0413">
    <property type="taxonomic scope" value="Bacteria"/>
</dbReference>
<dbReference type="HOGENOM" id="CLU_036645_1_0_6"/>
<dbReference type="UniPathway" id="UPA00028">
    <property type="reaction ID" value="UER00003"/>
</dbReference>
<dbReference type="Proteomes" id="UP000009100">
    <property type="component" value="Chromosome 1"/>
</dbReference>
<dbReference type="GO" id="GO:0005737">
    <property type="term" value="C:cytoplasm"/>
    <property type="evidence" value="ECO:0007669"/>
    <property type="project" value="UniProtKB-SubCell"/>
</dbReference>
<dbReference type="GO" id="GO:0003864">
    <property type="term" value="F:3-methyl-2-oxobutanoate hydroxymethyltransferase activity"/>
    <property type="evidence" value="ECO:0007669"/>
    <property type="project" value="UniProtKB-UniRule"/>
</dbReference>
<dbReference type="GO" id="GO:0000287">
    <property type="term" value="F:magnesium ion binding"/>
    <property type="evidence" value="ECO:0007669"/>
    <property type="project" value="TreeGrafter"/>
</dbReference>
<dbReference type="GO" id="GO:0015940">
    <property type="term" value="P:pantothenate biosynthetic process"/>
    <property type="evidence" value="ECO:0007669"/>
    <property type="project" value="UniProtKB-UniRule"/>
</dbReference>
<dbReference type="CDD" id="cd06557">
    <property type="entry name" value="KPHMT-like"/>
    <property type="match status" value="1"/>
</dbReference>
<dbReference type="FunFam" id="3.20.20.60:FF:000003">
    <property type="entry name" value="3-methyl-2-oxobutanoate hydroxymethyltransferase"/>
    <property type="match status" value="1"/>
</dbReference>
<dbReference type="Gene3D" id="3.20.20.60">
    <property type="entry name" value="Phosphoenolpyruvate-binding domains"/>
    <property type="match status" value="1"/>
</dbReference>
<dbReference type="HAMAP" id="MF_00156">
    <property type="entry name" value="PanB"/>
    <property type="match status" value="1"/>
</dbReference>
<dbReference type="InterPro" id="IPR003700">
    <property type="entry name" value="Pantoate_hydroxy_MeTrfase"/>
</dbReference>
<dbReference type="InterPro" id="IPR015813">
    <property type="entry name" value="Pyrv/PenolPyrv_kinase-like_dom"/>
</dbReference>
<dbReference type="InterPro" id="IPR040442">
    <property type="entry name" value="Pyrv_kinase-like_dom_sf"/>
</dbReference>
<dbReference type="NCBIfam" id="TIGR00222">
    <property type="entry name" value="panB"/>
    <property type="match status" value="1"/>
</dbReference>
<dbReference type="NCBIfam" id="NF001452">
    <property type="entry name" value="PRK00311.1"/>
    <property type="match status" value="1"/>
</dbReference>
<dbReference type="PANTHER" id="PTHR20881">
    <property type="entry name" value="3-METHYL-2-OXOBUTANOATE HYDROXYMETHYLTRANSFERASE"/>
    <property type="match status" value="1"/>
</dbReference>
<dbReference type="PANTHER" id="PTHR20881:SF0">
    <property type="entry name" value="3-METHYL-2-OXOBUTANOATE HYDROXYMETHYLTRANSFERASE"/>
    <property type="match status" value="1"/>
</dbReference>
<dbReference type="Pfam" id="PF02548">
    <property type="entry name" value="Pantoate_transf"/>
    <property type="match status" value="1"/>
</dbReference>
<dbReference type="PIRSF" id="PIRSF000388">
    <property type="entry name" value="Pantoate_hydroxy_MeTrfase"/>
    <property type="match status" value="1"/>
</dbReference>
<dbReference type="SUPFAM" id="SSF51621">
    <property type="entry name" value="Phosphoenolpyruvate/pyruvate domain"/>
    <property type="match status" value="1"/>
</dbReference>
<gene>
    <name evidence="1" type="primary">panB</name>
    <name type="ordered locus">VS_2532</name>
</gene>